<organism>
    <name type="scientific">Staphylococcus aureus</name>
    <dbReference type="NCBI Taxonomy" id="1280"/>
    <lineage>
        <taxon>Bacteria</taxon>
        <taxon>Bacillati</taxon>
        <taxon>Bacillota</taxon>
        <taxon>Bacilli</taxon>
        <taxon>Bacillales</taxon>
        <taxon>Staphylococcaceae</taxon>
        <taxon>Staphylococcus</taxon>
    </lineage>
</organism>
<accession>O05701</accession>
<name>DHPS_STAAU</name>
<gene>
    <name type="primary">folP</name>
    <name evidence="4" type="synonym">dpsA</name>
</gene>
<feature type="chain" id="PRO_0000168225" description="Dihydropteroate synthase">
    <location>
        <begin position="1"/>
        <end position="267"/>
    </location>
</feature>
<feature type="domain" description="Pterin-binding" evidence="2">
    <location>
        <begin position="1"/>
        <end position="251"/>
    </location>
</feature>
<feature type="binding site" evidence="6">
    <location>
        <position position="11"/>
    </location>
    <ligand>
        <name>Mg(2+)</name>
        <dbReference type="ChEBI" id="CHEBI:18420"/>
    </ligand>
</feature>
<feature type="binding site" evidence="6 7">
    <location>
        <position position="52"/>
    </location>
    <ligand>
        <name>(7,8-dihydropterin-6-yl)methyl diphosphate</name>
        <dbReference type="ChEBI" id="CHEBI:72950"/>
    </ligand>
</feature>
<feature type="binding site" evidence="6 7">
    <location>
        <position position="84"/>
    </location>
    <ligand>
        <name>(7,8-dihydropterin-6-yl)methyl diphosphate</name>
        <dbReference type="ChEBI" id="CHEBI:72950"/>
    </ligand>
</feature>
<feature type="binding site" evidence="6 7">
    <location>
        <position position="103"/>
    </location>
    <ligand>
        <name>(7,8-dihydropterin-6-yl)methyl diphosphate</name>
        <dbReference type="ChEBI" id="CHEBI:72950"/>
    </ligand>
</feature>
<feature type="binding site" evidence="6 7">
    <location>
        <position position="167"/>
    </location>
    <ligand>
        <name>(7,8-dihydropterin-6-yl)methyl diphosphate</name>
        <dbReference type="ChEBI" id="CHEBI:72950"/>
    </ligand>
</feature>
<feature type="binding site" evidence="6 7">
    <location>
        <position position="203"/>
    </location>
    <ligand>
        <name>(7,8-dihydropterin-6-yl)methyl diphosphate</name>
        <dbReference type="ChEBI" id="CHEBI:72950"/>
    </ligand>
</feature>
<feature type="binding site" evidence="6 7">
    <location>
        <begin position="239"/>
        <end position="241"/>
    </location>
    <ligand>
        <name>(7,8-dihydropterin-6-yl)methyl diphosphate</name>
        <dbReference type="ChEBI" id="CHEBI:72950"/>
    </ligand>
</feature>
<feature type="strand" evidence="9">
    <location>
        <begin position="5"/>
        <end position="10"/>
    </location>
</feature>
<feature type="helix" evidence="8">
    <location>
        <begin position="14"/>
        <end position="16"/>
    </location>
</feature>
<feature type="turn" evidence="8">
    <location>
        <begin position="20"/>
        <end position="23"/>
    </location>
</feature>
<feature type="helix" evidence="9">
    <location>
        <begin position="26"/>
        <end position="39"/>
    </location>
</feature>
<feature type="strand" evidence="9">
    <location>
        <begin position="42"/>
        <end position="46"/>
    </location>
</feature>
<feature type="strand" evidence="10">
    <location>
        <begin position="52"/>
        <end position="55"/>
    </location>
</feature>
<feature type="helix" evidence="9">
    <location>
        <begin position="60"/>
        <end position="74"/>
    </location>
</feature>
<feature type="strand" evidence="9">
    <location>
        <begin position="77"/>
        <end position="84"/>
    </location>
</feature>
<feature type="helix" evidence="9">
    <location>
        <begin position="88"/>
        <end position="96"/>
    </location>
</feature>
<feature type="strand" evidence="9">
    <location>
        <begin position="101"/>
        <end position="104"/>
    </location>
</feature>
<feature type="turn" evidence="9">
    <location>
        <begin position="105"/>
        <end position="108"/>
    </location>
</feature>
<feature type="helix" evidence="9">
    <location>
        <begin position="114"/>
        <end position="120"/>
    </location>
</feature>
<feature type="strand" evidence="9">
    <location>
        <begin position="124"/>
        <end position="128"/>
    </location>
</feature>
<feature type="helix" evidence="9">
    <location>
        <begin position="139"/>
        <end position="157"/>
    </location>
</feature>
<feature type="helix" evidence="9">
    <location>
        <begin position="161"/>
        <end position="163"/>
    </location>
</feature>
<feature type="strand" evidence="9">
    <location>
        <begin position="164"/>
        <end position="167"/>
    </location>
</feature>
<feature type="helix" evidence="9">
    <location>
        <begin position="176"/>
        <end position="184"/>
    </location>
</feature>
<feature type="helix" evidence="9">
    <location>
        <begin position="186"/>
        <end position="190"/>
    </location>
</feature>
<feature type="strand" evidence="9">
    <location>
        <begin position="196"/>
        <end position="198"/>
    </location>
</feature>
<feature type="helix" evidence="9">
    <location>
        <begin position="204"/>
        <end position="209"/>
    </location>
</feature>
<feature type="strand" evidence="9">
    <location>
        <begin position="210"/>
        <end position="212"/>
    </location>
</feature>
<feature type="helix" evidence="9">
    <location>
        <begin position="217"/>
        <end position="219"/>
    </location>
</feature>
<feature type="helix" evidence="9">
    <location>
        <begin position="220"/>
        <end position="233"/>
    </location>
</feature>
<feature type="strand" evidence="9">
    <location>
        <begin position="237"/>
        <end position="241"/>
    </location>
</feature>
<feature type="helix" evidence="9">
    <location>
        <begin position="243"/>
        <end position="259"/>
    </location>
</feature>
<evidence type="ECO:0000250" key="1">
    <source>
        <dbReference type="UniProtKB" id="P0AC13"/>
    </source>
</evidence>
<evidence type="ECO:0000255" key="2">
    <source>
        <dbReference type="PROSITE-ProRule" id="PRU00334"/>
    </source>
</evidence>
<evidence type="ECO:0000269" key="3">
    <source>
    </source>
</evidence>
<evidence type="ECO:0000303" key="4">
    <source>
    </source>
</evidence>
<evidence type="ECO:0000305" key="5"/>
<evidence type="ECO:0000305" key="6">
    <source>
    </source>
</evidence>
<evidence type="ECO:0007744" key="7">
    <source>
        <dbReference type="PDB" id="1AD4"/>
    </source>
</evidence>
<evidence type="ECO:0007829" key="8">
    <source>
        <dbReference type="PDB" id="1AD1"/>
    </source>
</evidence>
<evidence type="ECO:0007829" key="9">
    <source>
        <dbReference type="PDB" id="6CLU"/>
    </source>
</evidence>
<evidence type="ECO:0007829" key="10">
    <source>
        <dbReference type="PDB" id="6CLV"/>
    </source>
</evidence>
<protein>
    <recommendedName>
        <fullName evidence="4">Dihydropteroate synthase</fullName>
        <shortName evidence="4">DHPS</shortName>
        <ecNumber evidence="3">2.5.1.15</ecNumber>
    </recommendedName>
    <alternativeName>
        <fullName>Dihydropteroate pyrophosphorylase</fullName>
    </alternativeName>
</protein>
<sequence length="267" mass="29498">MTKTKIMGILNVTPDSFSDGGKFNNVESAVTRVKAMMDEGADIIDVGGVSTRPGHEMITVEEELNRVLPVVEAIVGFDVKISVDTFRSEVAEACLKLGVDIINDQWAGLYDHRMFQVVAKYDAEIVLMHNGNGNRDEPVVEEMLTSLLAQAHQAKIAGIPSNKIWLDPGIGFAKTRNEEAEVMARLDELVATEYPVLLATSRKRFTKEMMGYDTTPVERDEVTAATTAYGIMKGVRAVRVHNVELNAKLAKGIDFLKENENARHNFS</sequence>
<reference key="1">
    <citation type="journal article" date="1997" name="J. Mol. Biol.">
        <title>Structure and function of the dihydropteroate synthase from Staphylococcus aureus.</title>
        <authorList>
            <person name="Hampele I.C."/>
            <person name="D'Arcy A."/>
            <person name="Dale G.E."/>
            <person name="Kostrewa D."/>
            <person name="Nielsen J."/>
            <person name="Oefner C."/>
            <person name="Page M.G.P."/>
            <person name="Schoenfeld H.-J."/>
            <person name="Stueber D."/>
            <person name="Then R.L."/>
        </authorList>
    </citation>
    <scope>NUCLEOTIDE SEQUENCE [GENOMIC DNA]</scope>
    <scope>X-RAY CRYSTALLOGRAPHY (2.2 ANGSTROMS) OF APOENZYME AND IN COMPLEX WITH MANGANESE IONS AND HYDROXYMETHYLPTERIN DIPHOSPHATE</scope>
    <scope>SUBUNIT</scope>
    <scope>FUNCTION</scope>
    <scope>CATALYTIC ACTIVITY</scope>
    <scope>BIOPHYSICOCHEMICAL PROPERTIES</scope>
    <source>
        <strain>ATCC 25923 / DSM 1104 / JCM 2413 / NBRC 14462 / NCIMB 12702 / NCTC 12981 / Seattle 1945</strain>
    </source>
</reference>
<comment type="function">
    <text evidence="3">Catalyzes the condensation of para-aminobenzoate (pABA) with 6-hydroxymethyl-7,8-dihydropterin diphosphate (DHPt-PP) to form 7,8-dihydropteroate, the immediate precursor of folate derivatives.</text>
</comment>
<comment type="catalytic activity">
    <reaction evidence="3">
        <text>(7,8-dihydropterin-6-yl)methyl diphosphate + 4-aminobenzoate = 7,8-dihydropteroate + diphosphate</text>
        <dbReference type="Rhea" id="RHEA:19949"/>
        <dbReference type="ChEBI" id="CHEBI:17836"/>
        <dbReference type="ChEBI" id="CHEBI:17839"/>
        <dbReference type="ChEBI" id="CHEBI:33019"/>
        <dbReference type="ChEBI" id="CHEBI:72950"/>
        <dbReference type="EC" id="2.5.1.15"/>
    </reaction>
</comment>
<comment type="cofactor">
    <cofactor evidence="1 6">
        <name>Mg(2+)</name>
        <dbReference type="ChEBI" id="CHEBI:18420"/>
    </cofactor>
    <text evidence="5">Magnesium is required for activity, even if it seems to interact primarily with the substrate.</text>
</comment>
<comment type="biophysicochemical properties">
    <kinetics>
        <KM evidence="3">5.4 uM for 4-aminobenzoate</KM>
        <KM evidence="3">9.3 uM for 6-hydroxymethyl-7,8-dihydropterin diphosphate</KM>
    </kinetics>
</comment>
<comment type="pathway">
    <text evidence="6">Cofactor biosynthesis; tetrahydrofolate biosynthesis; 7,8-dihydrofolate from 2-amino-4-hydroxy-6-hydroxymethyl-7,8-dihydropteridine diphosphate and 4-aminobenzoate: step 1/2.</text>
</comment>
<comment type="subunit">
    <text evidence="3">Homodimer.</text>
</comment>
<comment type="miscellaneous">
    <text evidence="3">Specific mutations in this gene are a major cause of sulfonamide resistance in MRSA clinical isolates.</text>
</comment>
<comment type="similarity">
    <text evidence="5">Belongs to the DHPS family.</text>
</comment>
<proteinExistence type="evidence at protein level"/>
<keyword id="KW-0002">3D-structure</keyword>
<keyword id="KW-0046">Antibiotic resistance</keyword>
<keyword id="KW-0289">Folate biosynthesis</keyword>
<keyword id="KW-0460">Magnesium</keyword>
<keyword id="KW-0479">Metal-binding</keyword>
<keyword id="KW-0808">Transferase</keyword>
<dbReference type="EC" id="2.5.1.15" evidence="3"/>
<dbReference type="EMBL" id="Z84573">
    <property type="protein sequence ID" value="CAB06539.1"/>
    <property type="molecule type" value="Genomic_DNA"/>
</dbReference>
<dbReference type="RefSeq" id="WP_000167936.1">
    <property type="nucleotide sequence ID" value="NZ_WKIW01000023.1"/>
</dbReference>
<dbReference type="PDB" id="1AD1">
    <property type="method" value="X-ray"/>
    <property type="resolution" value="2.20 A"/>
    <property type="chains" value="A/B=2-267"/>
</dbReference>
<dbReference type="PDB" id="1AD4">
    <property type="method" value="X-ray"/>
    <property type="resolution" value="2.40 A"/>
    <property type="chains" value="A/B=2-267"/>
</dbReference>
<dbReference type="PDB" id="6CLU">
    <property type="method" value="X-ray"/>
    <property type="resolution" value="1.95 A"/>
    <property type="chains" value="A/B/C/D=1-267"/>
</dbReference>
<dbReference type="PDB" id="6CLV">
    <property type="method" value="X-ray"/>
    <property type="resolution" value="2.30 A"/>
    <property type="chains" value="A/B/C/D=1-267"/>
</dbReference>
<dbReference type="PDBsum" id="1AD1"/>
<dbReference type="PDBsum" id="1AD4"/>
<dbReference type="PDBsum" id="6CLU"/>
<dbReference type="PDBsum" id="6CLV"/>
<dbReference type="SMR" id="O05701"/>
<dbReference type="OMA" id="FATPRDC"/>
<dbReference type="BRENDA" id="2.5.1.15">
    <property type="organism ID" value="3352"/>
</dbReference>
<dbReference type="SABIO-RK" id="O05701"/>
<dbReference type="UniPathway" id="UPA00077">
    <property type="reaction ID" value="UER00156"/>
</dbReference>
<dbReference type="EvolutionaryTrace" id="O05701"/>
<dbReference type="GO" id="GO:0005829">
    <property type="term" value="C:cytosol"/>
    <property type="evidence" value="ECO:0007669"/>
    <property type="project" value="TreeGrafter"/>
</dbReference>
<dbReference type="GO" id="GO:0004156">
    <property type="term" value="F:dihydropteroate synthase activity"/>
    <property type="evidence" value="ECO:0007669"/>
    <property type="project" value="UniProtKB-EC"/>
</dbReference>
<dbReference type="GO" id="GO:0046872">
    <property type="term" value="F:metal ion binding"/>
    <property type="evidence" value="ECO:0007669"/>
    <property type="project" value="UniProtKB-KW"/>
</dbReference>
<dbReference type="GO" id="GO:0046656">
    <property type="term" value="P:folic acid biosynthetic process"/>
    <property type="evidence" value="ECO:0007669"/>
    <property type="project" value="UniProtKB-KW"/>
</dbReference>
<dbReference type="GO" id="GO:0046677">
    <property type="term" value="P:response to antibiotic"/>
    <property type="evidence" value="ECO:0007669"/>
    <property type="project" value="UniProtKB-KW"/>
</dbReference>
<dbReference type="GO" id="GO:0046654">
    <property type="term" value="P:tetrahydrofolate biosynthetic process"/>
    <property type="evidence" value="ECO:0007669"/>
    <property type="project" value="UniProtKB-UniPathway"/>
</dbReference>
<dbReference type="CDD" id="cd00739">
    <property type="entry name" value="DHPS"/>
    <property type="match status" value="1"/>
</dbReference>
<dbReference type="FunFam" id="3.20.20.20:FF:000010">
    <property type="entry name" value="Dihydropteroate synthase"/>
    <property type="match status" value="1"/>
</dbReference>
<dbReference type="Gene3D" id="3.20.20.20">
    <property type="entry name" value="Dihydropteroate synthase-like"/>
    <property type="match status" value="1"/>
</dbReference>
<dbReference type="InterPro" id="IPR045031">
    <property type="entry name" value="DHP_synth-like"/>
</dbReference>
<dbReference type="InterPro" id="IPR006390">
    <property type="entry name" value="DHP_synth_dom"/>
</dbReference>
<dbReference type="InterPro" id="IPR011005">
    <property type="entry name" value="Dihydropteroate_synth-like_sf"/>
</dbReference>
<dbReference type="InterPro" id="IPR000489">
    <property type="entry name" value="Pterin-binding_dom"/>
</dbReference>
<dbReference type="NCBIfam" id="TIGR01496">
    <property type="entry name" value="DHPS"/>
    <property type="match status" value="1"/>
</dbReference>
<dbReference type="PANTHER" id="PTHR20941">
    <property type="entry name" value="FOLATE SYNTHESIS PROTEINS"/>
    <property type="match status" value="1"/>
</dbReference>
<dbReference type="PANTHER" id="PTHR20941:SF1">
    <property type="entry name" value="FOLIC ACID SYNTHESIS PROTEIN FOL1"/>
    <property type="match status" value="1"/>
</dbReference>
<dbReference type="Pfam" id="PF00809">
    <property type="entry name" value="Pterin_bind"/>
    <property type="match status" value="1"/>
</dbReference>
<dbReference type="SUPFAM" id="SSF51717">
    <property type="entry name" value="Dihydropteroate synthetase-like"/>
    <property type="match status" value="1"/>
</dbReference>
<dbReference type="PROSITE" id="PS00792">
    <property type="entry name" value="DHPS_1"/>
    <property type="match status" value="1"/>
</dbReference>
<dbReference type="PROSITE" id="PS00793">
    <property type="entry name" value="DHPS_2"/>
    <property type="match status" value="1"/>
</dbReference>
<dbReference type="PROSITE" id="PS50972">
    <property type="entry name" value="PTERIN_BINDING"/>
    <property type="match status" value="1"/>
</dbReference>